<proteinExistence type="uncertain"/>
<gene>
    <name type="primary">ykiA</name>
    <name type="ordered locus">b0392</name>
    <name type="ordered locus">JW0383</name>
</gene>
<comment type="similarity">
    <text evidence="1">To E.coli YdbD C-terminal region.</text>
</comment>
<comment type="caution">
    <text evidence="1">Could be the product of a pseudogene.</text>
</comment>
<protein>
    <recommendedName>
        <fullName>Putative uncharacterized protein YkiA</fullName>
    </recommendedName>
</protein>
<sequence>MLQSRNDHLRQTALRNAHTPALLLTTLTEPQDRSLAINNPQLAADVKTAWLKEDPSLLLFVEQPDLSLLRDLVKTGATRKIRSEARHRLEEKQ</sequence>
<accession>P75704</accession>
<accession>Q2MC33</accession>
<organism>
    <name type="scientific">Escherichia coli (strain K12)</name>
    <dbReference type="NCBI Taxonomy" id="83333"/>
    <lineage>
        <taxon>Bacteria</taxon>
        <taxon>Pseudomonadati</taxon>
        <taxon>Pseudomonadota</taxon>
        <taxon>Gammaproteobacteria</taxon>
        <taxon>Enterobacterales</taxon>
        <taxon>Enterobacteriaceae</taxon>
        <taxon>Escherichia</taxon>
    </lineage>
</organism>
<dbReference type="EMBL" id="U00096">
    <property type="status" value="NOT_ANNOTATED_CDS"/>
    <property type="molecule type" value="Genomic_DNA"/>
</dbReference>
<dbReference type="EMBL" id="AP009048">
    <property type="protein sequence ID" value="BAE76173.1"/>
    <property type="molecule type" value="Genomic_DNA"/>
</dbReference>
<dbReference type="PIR" id="H64767">
    <property type="entry name" value="H64767"/>
</dbReference>
<dbReference type="BioGRID" id="4263095">
    <property type="interactions" value="12"/>
</dbReference>
<dbReference type="FunCoup" id="P75704">
    <property type="interactions" value="6"/>
</dbReference>
<dbReference type="KEGG" id="ecj:JW0383"/>
<dbReference type="KEGG" id="ecoc:C3026_01905"/>
<dbReference type="PATRIC" id="fig|83333.103.peg.1154"/>
<dbReference type="EchoBASE" id="EB4030"/>
<dbReference type="eggNOG" id="ENOG50341YA">
    <property type="taxonomic scope" value="Bacteria"/>
</dbReference>
<dbReference type="HOGENOM" id="CLU_170967_0_0_6"/>
<dbReference type="InParanoid" id="P75704"/>
<dbReference type="OMA" id="NVHLRQT"/>
<dbReference type="Proteomes" id="UP000000625">
    <property type="component" value="Chromosome"/>
</dbReference>
<dbReference type="InterPro" id="IPR024497">
    <property type="entry name" value="DUF2773"/>
</dbReference>
<dbReference type="Pfam" id="PF10971">
    <property type="entry name" value="DUF2773"/>
    <property type="match status" value="1"/>
</dbReference>
<reference key="1">
    <citation type="journal article" date="1997" name="Science">
        <title>The complete genome sequence of Escherichia coli K-12.</title>
        <authorList>
            <person name="Blattner F.R."/>
            <person name="Plunkett G. III"/>
            <person name="Bloch C.A."/>
            <person name="Perna N.T."/>
            <person name="Burland V."/>
            <person name="Riley M."/>
            <person name="Collado-Vides J."/>
            <person name="Glasner J.D."/>
            <person name="Rode C.K."/>
            <person name="Mayhew G.F."/>
            <person name="Gregor J."/>
            <person name="Davis N.W."/>
            <person name="Kirkpatrick H.A."/>
            <person name="Goeden M.A."/>
            <person name="Rose D.J."/>
            <person name="Mau B."/>
            <person name="Shao Y."/>
        </authorList>
    </citation>
    <scope>NUCLEOTIDE SEQUENCE [LARGE SCALE GENOMIC DNA]</scope>
    <source>
        <strain>K12 / MG1655 / ATCC 47076</strain>
    </source>
</reference>
<reference key="2">
    <citation type="journal article" date="2006" name="Mol. Syst. Biol.">
        <title>Highly accurate genome sequences of Escherichia coli K-12 strains MG1655 and W3110.</title>
        <authorList>
            <person name="Hayashi K."/>
            <person name="Morooka N."/>
            <person name="Yamamoto Y."/>
            <person name="Fujita K."/>
            <person name="Isono K."/>
            <person name="Choi S."/>
            <person name="Ohtsubo E."/>
            <person name="Baba T."/>
            <person name="Wanner B.L."/>
            <person name="Mori H."/>
            <person name="Horiuchi T."/>
        </authorList>
    </citation>
    <scope>NUCLEOTIDE SEQUENCE [LARGE SCALE GENOMIC DNA]</scope>
    <source>
        <strain>K12 / W3110 / ATCC 27325 / DSM 5911</strain>
    </source>
</reference>
<name>YKIA_ECOLI</name>
<feature type="chain" id="PRO_0000168604" description="Putative uncharacterized protein YkiA">
    <location>
        <begin position="1"/>
        <end position="93"/>
    </location>
</feature>
<evidence type="ECO:0000305" key="1"/>
<keyword id="KW-1185">Reference proteome</keyword>